<name>MUTL_CHLL2</name>
<organism>
    <name type="scientific">Chlorobium limicola (strain DSM 245 / NBRC 103803 / 6330)</name>
    <dbReference type="NCBI Taxonomy" id="290315"/>
    <lineage>
        <taxon>Bacteria</taxon>
        <taxon>Pseudomonadati</taxon>
        <taxon>Chlorobiota</taxon>
        <taxon>Chlorobiia</taxon>
        <taxon>Chlorobiales</taxon>
        <taxon>Chlorobiaceae</taxon>
        <taxon>Chlorobium/Pelodictyon group</taxon>
        <taxon>Chlorobium</taxon>
    </lineage>
</organism>
<reference key="1">
    <citation type="submission" date="2008-05" db="EMBL/GenBank/DDBJ databases">
        <title>Complete sequence of Chlorobium limicola DSM 245.</title>
        <authorList>
            <consortium name="US DOE Joint Genome Institute"/>
            <person name="Lucas S."/>
            <person name="Copeland A."/>
            <person name="Lapidus A."/>
            <person name="Glavina del Rio T."/>
            <person name="Dalin E."/>
            <person name="Tice H."/>
            <person name="Bruce D."/>
            <person name="Goodwin L."/>
            <person name="Pitluck S."/>
            <person name="Schmutz J."/>
            <person name="Larimer F."/>
            <person name="Land M."/>
            <person name="Hauser L."/>
            <person name="Kyrpides N."/>
            <person name="Ovchinnikova G."/>
            <person name="Zhao F."/>
            <person name="Li T."/>
            <person name="Liu Z."/>
            <person name="Overmann J."/>
            <person name="Bryant D.A."/>
            <person name="Richardson P."/>
        </authorList>
    </citation>
    <scope>NUCLEOTIDE SEQUENCE [LARGE SCALE GENOMIC DNA]</scope>
    <source>
        <strain>DSM 245 / NBRC 103803 / 6330</strain>
    </source>
</reference>
<gene>
    <name evidence="1" type="primary">mutL</name>
    <name type="ordered locus">Clim_2328</name>
</gene>
<keyword id="KW-0227">DNA damage</keyword>
<keyword id="KW-0234">DNA repair</keyword>
<sequence>MAKISRLPDTVANKISAGEVVQRPASVVKELLENAIDAGASRITVMIKDAGKELIRIIDNGTGMNREDALLCVERFATSKISVVDDLDTLMSLGFRGEALASISSVSHFELKTRQAFSPLALKFRYEGGALAEESEVSGEEGTSISVRNLFYNVPARRKFLKSNATEFRHIFESVRSLSLAYADIEWRMYNDDEELFHFRNPDIRERLNYYYGSDFSEGLISITEENDYLSIHGFIGKPGMLKRHKADQLFYINRRIIQNRMLSQALQQAYGELLEDRQAPFAMLFLGIDPSRVDVNVHPAKLEVKFEDERSVRNMFYPVVKRAVQLHDFSPDASFVPDQGVQGESIQPEDEALNRRLMYHERPGRMATTAELYTDYRQHSLPQSSGKEHGPQSRQGEFFSAHEPLERWKKEGVEPEGDEVFTTMLQSRFHDDESAAGGGTEPKIWQLHNKYIICQIKNGMMIIDQHVAHERVLYERALDVMNQNVPNSQQLLFPQKIEMRQWEYEVFEEIRDDLYRLGFNLRDFGSKTVMIEGIPQDVRSGTEVTILQDMIAGYQENASKLKLEKRDNLAKSYSCRNAIMAGQKLSLEEMRSLIDNLFATRVPYSCPHGRPVIIKLMLDQLDRMFGRT</sequence>
<proteinExistence type="inferred from homology"/>
<feature type="chain" id="PRO_1000096636" description="DNA mismatch repair protein MutL">
    <location>
        <begin position="1"/>
        <end position="629"/>
    </location>
</feature>
<accession>B3EHI9</accession>
<dbReference type="EMBL" id="CP001097">
    <property type="protein sequence ID" value="ACD91351.1"/>
    <property type="molecule type" value="Genomic_DNA"/>
</dbReference>
<dbReference type="RefSeq" id="WP_012467216.1">
    <property type="nucleotide sequence ID" value="NC_010803.1"/>
</dbReference>
<dbReference type="SMR" id="B3EHI9"/>
<dbReference type="STRING" id="290315.Clim_2328"/>
<dbReference type="KEGG" id="cli:Clim_2328"/>
<dbReference type="eggNOG" id="COG0323">
    <property type="taxonomic scope" value="Bacteria"/>
</dbReference>
<dbReference type="HOGENOM" id="CLU_004131_4_0_10"/>
<dbReference type="OrthoDB" id="9763467at2"/>
<dbReference type="Proteomes" id="UP000008841">
    <property type="component" value="Chromosome"/>
</dbReference>
<dbReference type="GO" id="GO:0032300">
    <property type="term" value="C:mismatch repair complex"/>
    <property type="evidence" value="ECO:0007669"/>
    <property type="project" value="InterPro"/>
</dbReference>
<dbReference type="GO" id="GO:0005524">
    <property type="term" value="F:ATP binding"/>
    <property type="evidence" value="ECO:0007669"/>
    <property type="project" value="InterPro"/>
</dbReference>
<dbReference type="GO" id="GO:0016887">
    <property type="term" value="F:ATP hydrolysis activity"/>
    <property type="evidence" value="ECO:0007669"/>
    <property type="project" value="InterPro"/>
</dbReference>
<dbReference type="GO" id="GO:0140664">
    <property type="term" value="F:ATP-dependent DNA damage sensor activity"/>
    <property type="evidence" value="ECO:0007669"/>
    <property type="project" value="InterPro"/>
</dbReference>
<dbReference type="GO" id="GO:0030983">
    <property type="term" value="F:mismatched DNA binding"/>
    <property type="evidence" value="ECO:0007669"/>
    <property type="project" value="InterPro"/>
</dbReference>
<dbReference type="GO" id="GO:0006298">
    <property type="term" value="P:mismatch repair"/>
    <property type="evidence" value="ECO:0007669"/>
    <property type="project" value="UniProtKB-UniRule"/>
</dbReference>
<dbReference type="CDD" id="cd16926">
    <property type="entry name" value="HATPase_MutL-MLH-PMS-like"/>
    <property type="match status" value="1"/>
</dbReference>
<dbReference type="CDD" id="cd00782">
    <property type="entry name" value="MutL_Trans"/>
    <property type="match status" value="1"/>
</dbReference>
<dbReference type="FunFam" id="3.30.565.10:FF:000003">
    <property type="entry name" value="DNA mismatch repair endonuclease MutL"/>
    <property type="match status" value="1"/>
</dbReference>
<dbReference type="Gene3D" id="3.30.230.10">
    <property type="match status" value="1"/>
</dbReference>
<dbReference type="Gene3D" id="3.30.565.10">
    <property type="entry name" value="Histidine kinase-like ATPase, C-terminal domain"/>
    <property type="match status" value="1"/>
</dbReference>
<dbReference type="Gene3D" id="3.30.1540.20">
    <property type="entry name" value="MutL, C-terminal domain, dimerisation subdomain"/>
    <property type="match status" value="1"/>
</dbReference>
<dbReference type="Gene3D" id="3.30.1370.100">
    <property type="entry name" value="MutL, C-terminal domain, regulatory subdomain"/>
    <property type="match status" value="1"/>
</dbReference>
<dbReference type="HAMAP" id="MF_00149">
    <property type="entry name" value="DNA_mis_repair"/>
    <property type="match status" value="1"/>
</dbReference>
<dbReference type="InterPro" id="IPR014762">
    <property type="entry name" value="DNA_mismatch_repair_CS"/>
</dbReference>
<dbReference type="InterPro" id="IPR020667">
    <property type="entry name" value="DNA_mismatch_repair_MutL"/>
</dbReference>
<dbReference type="InterPro" id="IPR013507">
    <property type="entry name" value="DNA_mismatch_S5_2-like"/>
</dbReference>
<dbReference type="InterPro" id="IPR036890">
    <property type="entry name" value="HATPase_C_sf"/>
</dbReference>
<dbReference type="InterPro" id="IPR002099">
    <property type="entry name" value="MutL/Mlh/PMS"/>
</dbReference>
<dbReference type="InterPro" id="IPR038973">
    <property type="entry name" value="MutL/Mlh/Pms-like"/>
</dbReference>
<dbReference type="InterPro" id="IPR014790">
    <property type="entry name" value="MutL_C"/>
</dbReference>
<dbReference type="InterPro" id="IPR042120">
    <property type="entry name" value="MutL_C_dimsub"/>
</dbReference>
<dbReference type="InterPro" id="IPR042121">
    <property type="entry name" value="MutL_C_regsub"/>
</dbReference>
<dbReference type="InterPro" id="IPR037198">
    <property type="entry name" value="MutL_C_sf"/>
</dbReference>
<dbReference type="InterPro" id="IPR020568">
    <property type="entry name" value="Ribosomal_Su5_D2-typ_SF"/>
</dbReference>
<dbReference type="InterPro" id="IPR014721">
    <property type="entry name" value="Ribsml_uS5_D2-typ_fold_subgr"/>
</dbReference>
<dbReference type="NCBIfam" id="TIGR00585">
    <property type="entry name" value="mutl"/>
    <property type="match status" value="1"/>
</dbReference>
<dbReference type="PANTHER" id="PTHR10073">
    <property type="entry name" value="DNA MISMATCH REPAIR PROTEIN MLH, PMS, MUTL"/>
    <property type="match status" value="1"/>
</dbReference>
<dbReference type="PANTHER" id="PTHR10073:SF12">
    <property type="entry name" value="DNA MISMATCH REPAIR PROTEIN MLH1"/>
    <property type="match status" value="1"/>
</dbReference>
<dbReference type="Pfam" id="PF01119">
    <property type="entry name" value="DNA_mis_repair"/>
    <property type="match status" value="1"/>
</dbReference>
<dbReference type="Pfam" id="PF13589">
    <property type="entry name" value="HATPase_c_3"/>
    <property type="match status" value="1"/>
</dbReference>
<dbReference type="Pfam" id="PF08676">
    <property type="entry name" value="MutL_C"/>
    <property type="match status" value="1"/>
</dbReference>
<dbReference type="SMART" id="SM01340">
    <property type="entry name" value="DNA_mis_repair"/>
    <property type="match status" value="1"/>
</dbReference>
<dbReference type="SMART" id="SM00853">
    <property type="entry name" value="MutL_C"/>
    <property type="match status" value="1"/>
</dbReference>
<dbReference type="SUPFAM" id="SSF55874">
    <property type="entry name" value="ATPase domain of HSP90 chaperone/DNA topoisomerase II/histidine kinase"/>
    <property type="match status" value="1"/>
</dbReference>
<dbReference type="SUPFAM" id="SSF118116">
    <property type="entry name" value="DNA mismatch repair protein MutL"/>
    <property type="match status" value="1"/>
</dbReference>
<dbReference type="SUPFAM" id="SSF54211">
    <property type="entry name" value="Ribosomal protein S5 domain 2-like"/>
    <property type="match status" value="1"/>
</dbReference>
<dbReference type="PROSITE" id="PS00058">
    <property type="entry name" value="DNA_MISMATCH_REPAIR_1"/>
    <property type="match status" value="1"/>
</dbReference>
<evidence type="ECO:0000255" key="1">
    <source>
        <dbReference type="HAMAP-Rule" id="MF_00149"/>
    </source>
</evidence>
<protein>
    <recommendedName>
        <fullName evidence="1">DNA mismatch repair protein MutL</fullName>
    </recommendedName>
</protein>
<comment type="function">
    <text evidence="1">This protein is involved in the repair of mismatches in DNA. It is required for dam-dependent methyl-directed DNA mismatch repair. May act as a 'molecular matchmaker', a protein that promotes the formation of a stable complex between two or more DNA-binding proteins in an ATP-dependent manner without itself being part of a final effector complex.</text>
</comment>
<comment type="similarity">
    <text evidence="1">Belongs to the DNA mismatch repair MutL/HexB family.</text>
</comment>